<sequence>MIWHVQNENFILDSTRIFMKAFHLLLFHGSFIFPECILIFGLILLLMIDSTSDQKDIPWLYFISSTSLVMSIAALLFRWREEPMISFSGNFQTNNFNEIFQFLILLCSTLCIPLSVEYIECTEMAITEFLLFVLTATLGGMFLCGANDLITIFVAPECFSLCSYLLSGYTKRDVRSNEATTKYLLMGGASSSILVHGFSWLYGSSGGEIELQEIVNGLINTQMYNSPGISIALIFITVGIGFKLSPAPSHQWTPDVYEGSPTPVVAFLSVTSKVAASALATRIFDIPFYFSSNEWHLLLEILAILSMILGNLIAITQTSMKRMLAYSSIGQIGYVIIGIIVGDSNDGYASMITYMLFYISMNLGTFACIVLFGLRTGTDNIRDYAGLYTKDPFLALSLALCLLSLGGLPPLAGFFGKLHLFWCGWQAGLYFLVSIGLLTSVVSIYYYLKIIKLLMTGRNQEITPHVRNYRRSPLRSNNSIELSMIVCVIASTIPGISMNPIIAIAQDTLFF</sequence>
<reference key="1">
    <citation type="journal article" date="2006" name="BMC Plant Biol.">
        <title>Rapid and accurate pyrosequencing of angiosperm plastid genomes.</title>
        <authorList>
            <person name="Moore M.J."/>
            <person name="Dhingra A."/>
            <person name="Soltis P.S."/>
            <person name="Shaw R."/>
            <person name="Farmerie W.G."/>
            <person name="Folta K.M."/>
            <person name="Soltis D.E."/>
        </authorList>
    </citation>
    <scope>NUCLEOTIDE SEQUENCE [LARGE SCALE GENOMIC DNA]</scope>
</reference>
<name>NU2C2_NANDO</name>
<dbReference type="EC" id="7.1.1.-" evidence="1"/>
<dbReference type="EMBL" id="DQ923117">
    <property type="protein sequence ID" value="ABI49925.1"/>
    <property type="molecule type" value="Genomic_DNA"/>
</dbReference>
<dbReference type="SMR" id="P0CC95"/>
<dbReference type="GO" id="GO:0009535">
    <property type="term" value="C:chloroplast thylakoid membrane"/>
    <property type="evidence" value="ECO:0007669"/>
    <property type="project" value="UniProtKB-SubCell"/>
</dbReference>
<dbReference type="GO" id="GO:0008137">
    <property type="term" value="F:NADH dehydrogenase (ubiquinone) activity"/>
    <property type="evidence" value="ECO:0007669"/>
    <property type="project" value="InterPro"/>
</dbReference>
<dbReference type="GO" id="GO:0048038">
    <property type="term" value="F:quinone binding"/>
    <property type="evidence" value="ECO:0007669"/>
    <property type="project" value="UniProtKB-KW"/>
</dbReference>
<dbReference type="GO" id="GO:0042773">
    <property type="term" value="P:ATP synthesis coupled electron transport"/>
    <property type="evidence" value="ECO:0007669"/>
    <property type="project" value="InterPro"/>
</dbReference>
<dbReference type="GO" id="GO:0019684">
    <property type="term" value="P:photosynthesis, light reaction"/>
    <property type="evidence" value="ECO:0007669"/>
    <property type="project" value="UniProtKB-UniRule"/>
</dbReference>
<dbReference type="HAMAP" id="MF_00445">
    <property type="entry name" value="NDH1_NuoN_1"/>
    <property type="match status" value="1"/>
</dbReference>
<dbReference type="InterPro" id="IPR010096">
    <property type="entry name" value="NADH-Q_OxRdtase_suN/2"/>
</dbReference>
<dbReference type="InterPro" id="IPR001750">
    <property type="entry name" value="ND/Mrp_TM"/>
</dbReference>
<dbReference type="InterPro" id="IPR045693">
    <property type="entry name" value="Ndh2_N"/>
</dbReference>
<dbReference type="NCBIfam" id="TIGR01770">
    <property type="entry name" value="NDH_I_N"/>
    <property type="match status" value="1"/>
</dbReference>
<dbReference type="NCBIfam" id="NF002701">
    <property type="entry name" value="PRK02504.1"/>
    <property type="match status" value="1"/>
</dbReference>
<dbReference type="PANTHER" id="PTHR22773">
    <property type="entry name" value="NADH DEHYDROGENASE"/>
    <property type="match status" value="1"/>
</dbReference>
<dbReference type="Pfam" id="PF19530">
    <property type="entry name" value="Ndh2_N"/>
    <property type="match status" value="1"/>
</dbReference>
<dbReference type="Pfam" id="PF00361">
    <property type="entry name" value="Proton_antipo_M"/>
    <property type="match status" value="1"/>
</dbReference>
<dbReference type="PRINTS" id="PR01434">
    <property type="entry name" value="NADHDHGNASE5"/>
</dbReference>
<gene>
    <name evidence="1" type="primary">ndhB2</name>
</gene>
<protein>
    <recommendedName>
        <fullName evidence="1">NAD(P)H-quinone oxidoreductase subunit 2 B, chloroplastic</fullName>
        <ecNumber evidence="1">7.1.1.-</ecNumber>
    </recommendedName>
    <alternativeName>
        <fullName evidence="1">NAD(P)H dehydrogenase, subunit 2 B</fullName>
    </alternativeName>
    <alternativeName>
        <fullName evidence="1">NADH-plastoquinone oxidoreductase subunit 2 B</fullName>
    </alternativeName>
</protein>
<accession>P0CC95</accession>
<accession>Q09FQ0</accession>
<keyword id="KW-0150">Chloroplast</keyword>
<keyword id="KW-0472">Membrane</keyword>
<keyword id="KW-0520">NAD</keyword>
<keyword id="KW-0521">NADP</keyword>
<keyword id="KW-0934">Plastid</keyword>
<keyword id="KW-0618">Plastoquinone</keyword>
<keyword id="KW-0874">Quinone</keyword>
<keyword id="KW-0793">Thylakoid</keyword>
<keyword id="KW-1278">Translocase</keyword>
<keyword id="KW-0812">Transmembrane</keyword>
<keyword id="KW-1133">Transmembrane helix</keyword>
<keyword id="KW-0813">Transport</keyword>
<proteinExistence type="inferred from homology"/>
<evidence type="ECO:0000255" key="1">
    <source>
        <dbReference type="HAMAP-Rule" id="MF_00445"/>
    </source>
</evidence>
<geneLocation type="chloroplast"/>
<organism>
    <name type="scientific">Nandina domestica</name>
    <name type="common">Heavenly bamboo</name>
    <dbReference type="NCBI Taxonomy" id="41776"/>
    <lineage>
        <taxon>Eukaryota</taxon>
        <taxon>Viridiplantae</taxon>
        <taxon>Streptophyta</taxon>
        <taxon>Embryophyta</taxon>
        <taxon>Tracheophyta</taxon>
        <taxon>Spermatophyta</taxon>
        <taxon>Magnoliopsida</taxon>
        <taxon>Ranunculales</taxon>
        <taxon>Berberidaceae</taxon>
        <taxon>Nandinoideae</taxon>
        <taxon>Nandineae</taxon>
        <taxon>Nandina</taxon>
    </lineage>
</organism>
<feature type="chain" id="PRO_0000391285" description="NAD(P)H-quinone oxidoreductase subunit 2 B, chloroplastic">
    <location>
        <begin position="1"/>
        <end position="511"/>
    </location>
</feature>
<feature type="transmembrane region" description="Helical" evidence="1">
    <location>
        <begin position="24"/>
        <end position="44"/>
    </location>
</feature>
<feature type="transmembrane region" description="Helical" evidence="1">
    <location>
        <begin position="57"/>
        <end position="77"/>
    </location>
</feature>
<feature type="transmembrane region" description="Helical" evidence="1">
    <location>
        <begin position="99"/>
        <end position="119"/>
    </location>
</feature>
<feature type="transmembrane region" description="Helical" evidence="1">
    <location>
        <begin position="124"/>
        <end position="144"/>
    </location>
</feature>
<feature type="transmembrane region" description="Helical" evidence="1">
    <location>
        <begin position="149"/>
        <end position="169"/>
    </location>
</feature>
<feature type="transmembrane region" description="Helical" evidence="1">
    <location>
        <begin position="183"/>
        <end position="203"/>
    </location>
</feature>
<feature type="transmembrane region" description="Helical" evidence="1">
    <location>
        <begin position="227"/>
        <end position="247"/>
    </location>
</feature>
<feature type="transmembrane region" description="Helical" evidence="1">
    <location>
        <begin position="295"/>
        <end position="315"/>
    </location>
</feature>
<feature type="transmembrane region" description="Helical" evidence="1">
    <location>
        <begin position="323"/>
        <end position="343"/>
    </location>
</feature>
<feature type="transmembrane region" description="Helical" evidence="1">
    <location>
        <begin position="354"/>
        <end position="374"/>
    </location>
</feature>
<feature type="transmembrane region" description="Helical" evidence="1">
    <location>
        <begin position="395"/>
        <end position="415"/>
    </location>
</feature>
<feature type="transmembrane region" description="Helical" evidence="1">
    <location>
        <begin position="418"/>
        <end position="438"/>
    </location>
</feature>
<feature type="transmembrane region" description="Helical" evidence="1">
    <location>
        <begin position="484"/>
        <end position="504"/>
    </location>
</feature>
<comment type="function">
    <text evidence="1">NDH shuttles electrons from NAD(P)H:plastoquinone, via FMN and iron-sulfur (Fe-S) centers, to quinones in the photosynthetic chain and possibly in a chloroplast respiratory chain. The immediate electron acceptor for the enzyme in this species is believed to be plastoquinone. Couples the redox reaction to proton translocation, and thus conserves the redox energy in a proton gradient.</text>
</comment>
<comment type="catalytic activity">
    <reaction evidence="1">
        <text>a plastoquinone + NADH + (n+1) H(+)(in) = a plastoquinol + NAD(+) + n H(+)(out)</text>
        <dbReference type="Rhea" id="RHEA:42608"/>
        <dbReference type="Rhea" id="RHEA-COMP:9561"/>
        <dbReference type="Rhea" id="RHEA-COMP:9562"/>
        <dbReference type="ChEBI" id="CHEBI:15378"/>
        <dbReference type="ChEBI" id="CHEBI:17757"/>
        <dbReference type="ChEBI" id="CHEBI:57540"/>
        <dbReference type="ChEBI" id="CHEBI:57945"/>
        <dbReference type="ChEBI" id="CHEBI:62192"/>
    </reaction>
</comment>
<comment type="catalytic activity">
    <reaction evidence="1">
        <text>a plastoquinone + NADPH + (n+1) H(+)(in) = a plastoquinol + NADP(+) + n H(+)(out)</text>
        <dbReference type="Rhea" id="RHEA:42612"/>
        <dbReference type="Rhea" id="RHEA-COMP:9561"/>
        <dbReference type="Rhea" id="RHEA-COMP:9562"/>
        <dbReference type="ChEBI" id="CHEBI:15378"/>
        <dbReference type="ChEBI" id="CHEBI:17757"/>
        <dbReference type="ChEBI" id="CHEBI:57783"/>
        <dbReference type="ChEBI" id="CHEBI:58349"/>
        <dbReference type="ChEBI" id="CHEBI:62192"/>
    </reaction>
</comment>
<comment type="subunit">
    <text evidence="1">NDH is composed of at least 16 different subunits, 5 of which are encoded in the nucleus.</text>
</comment>
<comment type="subcellular location">
    <subcellularLocation>
        <location evidence="1">Plastid</location>
        <location evidence="1">Chloroplast thylakoid membrane</location>
        <topology evidence="1">Multi-pass membrane protein</topology>
    </subcellularLocation>
</comment>
<comment type="similarity">
    <text evidence="1">Belongs to the complex I subunit 2 family.</text>
</comment>